<protein>
    <recommendedName>
        <fullName evidence="1">Probable nicotinate-nucleotide adenylyltransferase</fullName>
        <ecNumber evidence="1">2.7.7.18</ecNumber>
    </recommendedName>
    <alternativeName>
        <fullName evidence="1">Deamido-NAD(+) diphosphorylase</fullName>
    </alternativeName>
    <alternativeName>
        <fullName evidence="1">Deamido-NAD(+) pyrophosphorylase</fullName>
    </alternativeName>
    <alternativeName>
        <fullName evidence="1">Nicotinate mononucleotide adenylyltransferase</fullName>
        <shortName evidence="1">NaMN adenylyltransferase</shortName>
    </alternativeName>
</protein>
<reference key="1">
    <citation type="submission" date="2007-07" db="EMBL/GenBank/DDBJ databases">
        <title>Complete sequence of chromosome of Shewanella baltica OS185.</title>
        <authorList>
            <consortium name="US DOE Joint Genome Institute"/>
            <person name="Copeland A."/>
            <person name="Lucas S."/>
            <person name="Lapidus A."/>
            <person name="Barry K."/>
            <person name="Glavina del Rio T."/>
            <person name="Dalin E."/>
            <person name="Tice H."/>
            <person name="Pitluck S."/>
            <person name="Sims D."/>
            <person name="Brettin T."/>
            <person name="Bruce D."/>
            <person name="Detter J.C."/>
            <person name="Han C."/>
            <person name="Schmutz J."/>
            <person name="Larimer F."/>
            <person name="Land M."/>
            <person name="Hauser L."/>
            <person name="Kyrpides N."/>
            <person name="Mikhailova N."/>
            <person name="Brettar I."/>
            <person name="Rodrigues J."/>
            <person name="Konstantinidis K."/>
            <person name="Tiedje J."/>
            <person name="Richardson P."/>
        </authorList>
    </citation>
    <scope>NUCLEOTIDE SEQUENCE [LARGE SCALE GENOMIC DNA]</scope>
    <source>
        <strain>OS185</strain>
    </source>
</reference>
<comment type="function">
    <text evidence="1">Catalyzes the reversible adenylation of nicotinate mononucleotide (NaMN) to nicotinic acid adenine dinucleotide (NaAD).</text>
</comment>
<comment type="catalytic activity">
    <reaction evidence="1">
        <text>nicotinate beta-D-ribonucleotide + ATP + H(+) = deamido-NAD(+) + diphosphate</text>
        <dbReference type="Rhea" id="RHEA:22860"/>
        <dbReference type="ChEBI" id="CHEBI:15378"/>
        <dbReference type="ChEBI" id="CHEBI:30616"/>
        <dbReference type="ChEBI" id="CHEBI:33019"/>
        <dbReference type="ChEBI" id="CHEBI:57502"/>
        <dbReference type="ChEBI" id="CHEBI:58437"/>
        <dbReference type="EC" id="2.7.7.18"/>
    </reaction>
</comment>
<comment type="pathway">
    <text evidence="1">Cofactor biosynthesis; NAD(+) biosynthesis; deamido-NAD(+) from nicotinate D-ribonucleotide: step 1/1.</text>
</comment>
<comment type="similarity">
    <text evidence="1">Belongs to the NadD family.</text>
</comment>
<accession>A6WRK2</accession>
<evidence type="ECO:0000255" key="1">
    <source>
        <dbReference type="HAMAP-Rule" id="MF_00244"/>
    </source>
</evidence>
<keyword id="KW-0067">ATP-binding</keyword>
<keyword id="KW-0520">NAD</keyword>
<keyword id="KW-0547">Nucleotide-binding</keyword>
<keyword id="KW-0548">Nucleotidyltransferase</keyword>
<keyword id="KW-0662">Pyridine nucleotide biosynthesis</keyword>
<keyword id="KW-0808">Transferase</keyword>
<organism>
    <name type="scientific">Shewanella baltica (strain OS185)</name>
    <dbReference type="NCBI Taxonomy" id="402882"/>
    <lineage>
        <taxon>Bacteria</taxon>
        <taxon>Pseudomonadati</taxon>
        <taxon>Pseudomonadota</taxon>
        <taxon>Gammaproteobacteria</taxon>
        <taxon>Alteromonadales</taxon>
        <taxon>Shewanellaceae</taxon>
        <taxon>Shewanella</taxon>
    </lineage>
</organism>
<proteinExistence type="inferred from homology"/>
<feature type="chain" id="PRO_1000044689" description="Probable nicotinate-nucleotide adenylyltransferase">
    <location>
        <begin position="1"/>
        <end position="216"/>
    </location>
</feature>
<sequence length="216" mass="24759">MRIGILGGTFDPIHYGHIRPAIEVKHALALDKILLMPNHIPPHKHQPNLTTAQRLKMVADVCSQLDGFELCDIEAKRDTPSYTVVTLEQLKSLHPEHELFFIMGMDSFLQLKSWYEWQRLFDFAHLVVCQRPGWQLDAAHPMQQILTARSHAHQETHEGHAKNTHKNSGQIFPVTITPQDISSTQIREQLAKGEIPADLLMPITLDYIQNQRLYLP</sequence>
<gene>
    <name evidence="1" type="primary">nadD</name>
    <name type="ordered locus">Shew185_3314</name>
</gene>
<dbReference type="EC" id="2.7.7.18" evidence="1"/>
<dbReference type="EMBL" id="CP000753">
    <property type="protein sequence ID" value="ABS09441.1"/>
    <property type="molecule type" value="Genomic_DNA"/>
</dbReference>
<dbReference type="RefSeq" id="WP_012089940.1">
    <property type="nucleotide sequence ID" value="NC_009665.1"/>
</dbReference>
<dbReference type="SMR" id="A6WRK2"/>
<dbReference type="KEGG" id="sbm:Shew185_3314"/>
<dbReference type="HOGENOM" id="CLU_069765_0_0_6"/>
<dbReference type="UniPathway" id="UPA00253">
    <property type="reaction ID" value="UER00332"/>
</dbReference>
<dbReference type="GO" id="GO:0005524">
    <property type="term" value="F:ATP binding"/>
    <property type="evidence" value="ECO:0007669"/>
    <property type="project" value="UniProtKB-KW"/>
</dbReference>
<dbReference type="GO" id="GO:0004515">
    <property type="term" value="F:nicotinate-nucleotide adenylyltransferase activity"/>
    <property type="evidence" value="ECO:0007669"/>
    <property type="project" value="UniProtKB-UniRule"/>
</dbReference>
<dbReference type="GO" id="GO:0009435">
    <property type="term" value="P:NAD biosynthetic process"/>
    <property type="evidence" value="ECO:0007669"/>
    <property type="project" value="UniProtKB-UniRule"/>
</dbReference>
<dbReference type="CDD" id="cd02165">
    <property type="entry name" value="NMNAT"/>
    <property type="match status" value="1"/>
</dbReference>
<dbReference type="FunFam" id="3.40.50.620:FF:000039">
    <property type="entry name" value="Probable nicotinate-nucleotide adenylyltransferase"/>
    <property type="match status" value="1"/>
</dbReference>
<dbReference type="Gene3D" id="3.40.50.620">
    <property type="entry name" value="HUPs"/>
    <property type="match status" value="1"/>
</dbReference>
<dbReference type="HAMAP" id="MF_00244">
    <property type="entry name" value="NaMN_adenylyltr"/>
    <property type="match status" value="1"/>
</dbReference>
<dbReference type="InterPro" id="IPR004821">
    <property type="entry name" value="Cyt_trans-like"/>
</dbReference>
<dbReference type="InterPro" id="IPR005248">
    <property type="entry name" value="NadD/NMNAT"/>
</dbReference>
<dbReference type="InterPro" id="IPR014729">
    <property type="entry name" value="Rossmann-like_a/b/a_fold"/>
</dbReference>
<dbReference type="NCBIfam" id="TIGR00125">
    <property type="entry name" value="cyt_tran_rel"/>
    <property type="match status" value="1"/>
</dbReference>
<dbReference type="NCBIfam" id="TIGR00482">
    <property type="entry name" value="nicotinate (nicotinamide) nucleotide adenylyltransferase"/>
    <property type="match status" value="1"/>
</dbReference>
<dbReference type="NCBIfam" id="NF000839">
    <property type="entry name" value="PRK00071.1-1"/>
    <property type="match status" value="1"/>
</dbReference>
<dbReference type="NCBIfam" id="NF000840">
    <property type="entry name" value="PRK00071.1-3"/>
    <property type="match status" value="1"/>
</dbReference>
<dbReference type="PANTHER" id="PTHR39321">
    <property type="entry name" value="NICOTINATE-NUCLEOTIDE ADENYLYLTRANSFERASE-RELATED"/>
    <property type="match status" value="1"/>
</dbReference>
<dbReference type="PANTHER" id="PTHR39321:SF3">
    <property type="entry name" value="PHOSPHOPANTETHEINE ADENYLYLTRANSFERASE"/>
    <property type="match status" value="1"/>
</dbReference>
<dbReference type="Pfam" id="PF01467">
    <property type="entry name" value="CTP_transf_like"/>
    <property type="match status" value="1"/>
</dbReference>
<dbReference type="SUPFAM" id="SSF52374">
    <property type="entry name" value="Nucleotidylyl transferase"/>
    <property type="match status" value="1"/>
</dbReference>
<name>NADD_SHEB8</name>